<evidence type="ECO:0000250" key="1">
    <source>
        <dbReference type="UniProtKB" id="P48449"/>
    </source>
</evidence>
<evidence type="ECO:0000255" key="2"/>
<evidence type="ECO:0000269" key="3">
    <source>
    </source>
</evidence>
<evidence type="ECO:0000303" key="4">
    <source>
    </source>
</evidence>
<evidence type="ECO:0000305" key="5"/>
<evidence type="ECO:0000312" key="6">
    <source>
        <dbReference type="EMBL" id="KAK9726778.1"/>
    </source>
</evidence>
<evidence type="ECO:0000312" key="7">
    <source>
        <dbReference type="EMBL" id="WWM48160.1"/>
    </source>
</evidence>
<comment type="function">
    <text evidence="3">Component of the oleanane-type triterpene saponins (e.g. saponarioside A and saponarioside B) biosynthetic pathway, leading to the production of natural products with detergent properties used as traditional sources of soap (PubMed:39043959). Oxidosqualene cyclase mediating the conversion of oxidosqualene to beta-amyrin, generating five rings and eight asymmetric centers in a single transformation (PubMed:39043959).</text>
</comment>
<comment type="catalytic activity">
    <reaction evidence="3">
        <text>(S)-2,3-epoxysqualene = beta-amyrin</text>
        <dbReference type="Rhea" id="RHEA:31007"/>
        <dbReference type="ChEBI" id="CHEBI:10352"/>
        <dbReference type="ChEBI" id="CHEBI:15441"/>
        <dbReference type="EC" id="5.4.99.39"/>
    </reaction>
    <physiologicalReaction direction="left-to-right" evidence="3">
        <dbReference type="Rhea" id="RHEA:31008"/>
    </physiologicalReaction>
</comment>
<comment type="pathway">
    <text evidence="3">Secondary metabolite biosynthesis; terpenoid biosynthesis.</text>
</comment>
<comment type="tissue specificity">
    <text evidence="3">Highly expressed in flowers and flower buds, to a lower extent in young leaves, and present in old leaves, stems and roots.</text>
</comment>
<comment type="biotechnology">
    <text evidence="4">Soapwort saponins possess anticancer properties and are also being explored as enhancers for endosomal escape in targeted tumor therapies (PubMed:39043959). They may also serve as precursors for vaccine adjuvants (PubMed:39043959).</text>
</comment>
<comment type="similarity">
    <text evidence="5">Belongs to the terpene cyclase/mutase family.</text>
</comment>
<sequence length="760" mass="87325">MWRLKIAEGGNDPYLYSTNNFVGRQTWEFDSEYGTPEAIKEVEEARQIFYKNRFQVKPCGDLLWRFQFLREKNFKQTIPQVKVGDGEEVTYEAASTTLKRSVNLLTALQADDGHWPAEIAGPQFFLPPLVFCLYITGHLNVVFNVHHREEILRSIYYHQNEDGGWGLHIEGHSTMFCTALNYICLRMLGVGPDEGDDNACPRARKWILDHGSVTHIPSWGKTWLSILGLFDWSGSNPMPPEFWILPTFMPMYPAKMWCYCRMVYMPMSYLYGKRFVGPITPLIKQLREELFSEPFEEIKWKKVRHLCAPEDLYYPHPLIQDLMWDSLYLFTEPLLTRWPFNNLIRQKALQVTMDHIHYEDENSRYITIGCVEKVLCMLACWVEDPNGVCYKKHLARVPDYIWIAEDGLKMQSFGSQQWDCGFAVQALLASNMSLDEIGPALKKGHFFIKESQVKDNPSGDFKSMHRHISKGSWTFSDQDHGWQVSDCTAEGLKCCLILSTMPPEIVGEKMDPERLYDSVNVLLSLQSENGGLSAWEPAGAQAWLELLNPTEFFADIVIEHEYVECTGASIQALVLFKKMYPGHRKKEIENFIAKAAKYLEDTQYPNGSWYGNWGVCFTYGTWFALGGLAAAGKTYANCAAMRKGVEFLLKSQKEDGGWGESYVSCPKKDFVPLEGPSNLTQTAWALMGLIYARQMERDPTPLHQAAKLLINSQLENGDFPQQEITGVFMKNCMLHYPMYRTIYPLWAIAEYRTHVPLRLS</sequence>
<proteinExistence type="evidence at protein level"/>
<gene>
    <name evidence="4" type="primary">bAS1</name>
    <name evidence="4" type="synonym">Saoffv11027757m</name>
    <name evidence="6" type="ORF">RND81_05G236200</name>
</gene>
<accession>A0AAW1L0L7</accession>
<protein>
    <recommendedName>
        <fullName evidence="4">Beta-amyrin synthase 1</fullName>
        <shortName evidence="4">SobAS1</shortName>
        <ecNumber evidence="3">5.4.99.39</ecNumber>
    </recommendedName>
</protein>
<feature type="chain" id="PRO_0000462357" description="Beta-amyrin synthase 1">
    <location>
        <begin position="1"/>
        <end position="760"/>
    </location>
</feature>
<feature type="repeat" description="PFTB 1" evidence="2">
    <location>
        <begin position="98"/>
        <end position="140"/>
    </location>
</feature>
<feature type="repeat" description="PFTB 2" evidence="2">
    <location>
        <begin position="148"/>
        <end position="189"/>
    </location>
</feature>
<feature type="repeat" description="PFTB 3" evidence="2">
    <location>
        <begin position="441"/>
        <end position="485"/>
    </location>
</feature>
<feature type="repeat" description="PFTB 4" evidence="2">
    <location>
        <begin position="515"/>
        <end position="556"/>
    </location>
</feature>
<feature type="repeat" description="PFTB 5" evidence="2">
    <location>
        <begin position="592"/>
        <end position="632"/>
    </location>
</feature>
<feature type="repeat" description="PFTB 6" evidence="2">
    <location>
        <begin position="641"/>
        <end position="683"/>
    </location>
</feature>
<feature type="repeat" description="PFTB 7" evidence="2">
    <location>
        <begin position="702"/>
        <end position="743"/>
    </location>
</feature>
<feature type="active site" description="Proton donor" evidence="1">
    <location>
        <position position="486"/>
    </location>
</feature>
<name>BAMS1_SAPOF</name>
<organism>
    <name type="scientific">Saponaria officinalis</name>
    <name type="common">Common soapwort</name>
    <name type="synonym">Lychnis saponaria</name>
    <dbReference type="NCBI Taxonomy" id="3572"/>
    <lineage>
        <taxon>Eukaryota</taxon>
        <taxon>Viridiplantae</taxon>
        <taxon>Streptophyta</taxon>
        <taxon>Embryophyta</taxon>
        <taxon>Tracheophyta</taxon>
        <taxon>Spermatophyta</taxon>
        <taxon>Magnoliopsida</taxon>
        <taxon>eudicotyledons</taxon>
        <taxon>Gunneridae</taxon>
        <taxon>Pentapetalae</taxon>
        <taxon>Caryophyllales</taxon>
        <taxon>Caryophyllaceae</taxon>
        <taxon>Caryophylleae</taxon>
        <taxon>Saponaria</taxon>
    </lineage>
</organism>
<keyword id="KW-0413">Isomerase</keyword>
<keyword id="KW-0677">Repeat</keyword>
<dbReference type="EC" id="5.4.99.39" evidence="3"/>
<dbReference type="EMBL" id="OR426407">
    <property type="protein sequence ID" value="WWM48160.1"/>
    <property type="molecule type" value="mRNA"/>
</dbReference>
<dbReference type="EMBL" id="JBDFQZ010000005">
    <property type="protein sequence ID" value="KAK9726778.1"/>
    <property type="molecule type" value="Genomic_DNA"/>
</dbReference>
<dbReference type="UniPathway" id="UPA00213"/>
<dbReference type="Proteomes" id="UP001443914">
    <property type="component" value="Unassembled WGS sequence"/>
</dbReference>
<dbReference type="GO" id="GO:0005811">
    <property type="term" value="C:lipid droplet"/>
    <property type="evidence" value="ECO:0007669"/>
    <property type="project" value="InterPro"/>
</dbReference>
<dbReference type="GO" id="GO:0042300">
    <property type="term" value="F:beta-amyrin synthase activity"/>
    <property type="evidence" value="ECO:0000314"/>
    <property type="project" value="UniProtKB"/>
</dbReference>
<dbReference type="GO" id="GO:0016135">
    <property type="term" value="P:saponin biosynthetic process"/>
    <property type="evidence" value="ECO:0000314"/>
    <property type="project" value="UniProtKB"/>
</dbReference>
<dbReference type="GO" id="GO:0016104">
    <property type="term" value="P:triterpenoid biosynthetic process"/>
    <property type="evidence" value="ECO:0000314"/>
    <property type="project" value="UniProtKB"/>
</dbReference>
<dbReference type="CDD" id="cd02892">
    <property type="entry name" value="SQCY_1"/>
    <property type="match status" value="1"/>
</dbReference>
<dbReference type="FunFam" id="1.50.10.20:FF:000011">
    <property type="entry name" value="Terpene cyclase/mutase family member"/>
    <property type="match status" value="1"/>
</dbReference>
<dbReference type="FunFam" id="1.50.10.20:FF:000064">
    <property type="entry name" value="Uncharacterized protein"/>
    <property type="match status" value="1"/>
</dbReference>
<dbReference type="Gene3D" id="1.50.10.20">
    <property type="match status" value="2"/>
</dbReference>
<dbReference type="InterPro" id="IPR032696">
    <property type="entry name" value="SQ_cyclase_C"/>
</dbReference>
<dbReference type="InterPro" id="IPR032697">
    <property type="entry name" value="SQ_cyclase_N"/>
</dbReference>
<dbReference type="InterPro" id="IPR018333">
    <property type="entry name" value="Squalene_cyclase"/>
</dbReference>
<dbReference type="InterPro" id="IPR008930">
    <property type="entry name" value="Terpenoid_cyclase/PrenylTrfase"/>
</dbReference>
<dbReference type="NCBIfam" id="TIGR01787">
    <property type="entry name" value="squalene_cyclas"/>
    <property type="match status" value="1"/>
</dbReference>
<dbReference type="PANTHER" id="PTHR11764:SF58">
    <property type="entry name" value="BETA-AMYRIN SYNTHASE-RELATED"/>
    <property type="match status" value="1"/>
</dbReference>
<dbReference type="PANTHER" id="PTHR11764">
    <property type="entry name" value="TERPENE CYCLASE/MUTASE FAMILY MEMBER"/>
    <property type="match status" value="1"/>
</dbReference>
<dbReference type="Pfam" id="PF13243">
    <property type="entry name" value="SQHop_cyclase_C"/>
    <property type="match status" value="1"/>
</dbReference>
<dbReference type="Pfam" id="PF13249">
    <property type="entry name" value="SQHop_cyclase_N"/>
    <property type="match status" value="1"/>
</dbReference>
<dbReference type="SFLD" id="SFLDG01016">
    <property type="entry name" value="Prenyltransferase_Like_2"/>
    <property type="match status" value="1"/>
</dbReference>
<dbReference type="SUPFAM" id="SSF48239">
    <property type="entry name" value="Terpenoid cyclases/Protein prenyltransferases"/>
    <property type="match status" value="2"/>
</dbReference>
<reference evidence="7" key="1">
    <citation type="journal article" date="2025" name="Nat. Chem. Biol.">
        <title>Unlocking saponin biosynthesis in soapwort.</title>
        <authorList>
            <person name="Jo S."/>
            <person name="El-Demerdash A."/>
            <person name="Owen C."/>
            <person name="Srivastava V."/>
            <person name="Wu D."/>
            <person name="Kikuchi S."/>
            <person name="Reed J."/>
            <person name="Hodgson H."/>
            <person name="Harkess A."/>
            <person name="Shu S."/>
            <person name="Plott C."/>
            <person name="Jenkins J."/>
            <person name="Williams M."/>
            <person name="Boston L.-B."/>
            <person name="Lacchini E."/>
            <person name="Qu T."/>
            <person name="Goossens A."/>
            <person name="Grimwood J."/>
            <person name="Schmutz J."/>
            <person name="Leebens-Mack J."/>
            <person name="Osbourn A."/>
        </authorList>
    </citation>
    <scope>NUCLEOTIDE SEQUENCE [MRNA]</scope>
    <scope>FUNCTION</scope>
    <scope>CATALYTIC ACTIVITY</scope>
    <scope>TISSUE SPECIFICITY</scope>
    <scope>PATHWAY</scope>
    <scope>BIOTECHNOLOGY</scope>
</reference>
<reference evidence="6" key="2">
    <citation type="submission" date="2024-03" db="EMBL/GenBank/DDBJ databases">
        <title>WGS assembly of Saponaria officinalis var. Norfolk2.</title>
        <authorList>
            <person name="Jenkins J."/>
            <person name="Shu S."/>
            <person name="Grimwood J."/>
            <person name="Barry K."/>
            <person name="Goodstein D."/>
            <person name="Schmutz J."/>
            <person name="Leebens-Mack J."/>
            <person name="Osbourn A."/>
        </authorList>
    </citation>
    <scope>NUCLEOTIDE SEQUENCE [LARGE SCALE GENOMIC DNA]</scope>
    <source>
        <strain>cv. Norfolk2</strain>
        <tissue>Leaf</tissue>
    </source>
</reference>